<reference key="1">
    <citation type="journal article" date="2007" name="PLoS ONE">
        <title>Complete genomic characterization of a pathogenic A.II strain of Francisella tularensis subspecies tularensis.</title>
        <authorList>
            <person name="Beckstrom-Sternberg S.M."/>
            <person name="Auerbach R.K."/>
            <person name="Godbole S."/>
            <person name="Pearson J.V."/>
            <person name="Beckstrom-Sternberg J.S."/>
            <person name="Deng Z."/>
            <person name="Munk C."/>
            <person name="Kubota K."/>
            <person name="Zhou Y."/>
            <person name="Bruce D."/>
            <person name="Noronha J."/>
            <person name="Scheuermann R.H."/>
            <person name="Wang A."/>
            <person name="Wei X."/>
            <person name="Wang J."/>
            <person name="Hao J."/>
            <person name="Wagner D.M."/>
            <person name="Brettin T.S."/>
            <person name="Brown N."/>
            <person name="Gilna P."/>
            <person name="Keim P.S."/>
        </authorList>
    </citation>
    <scope>NUCLEOTIDE SEQUENCE [LARGE SCALE GENOMIC DNA]</scope>
    <source>
        <strain>WY96-3418</strain>
    </source>
</reference>
<comment type="function">
    <text evidence="1">Catalyzes the last two sequential reactions in the de novo biosynthetic pathway for UDP-N-acetylglucosamine (UDP-GlcNAc). The C-terminal domain catalyzes the transfer of acetyl group from acetyl coenzyme A to glucosamine-1-phosphate (GlcN-1-P) to produce N-acetylglucosamine-1-phosphate (GlcNAc-1-P), which is converted into UDP-GlcNAc by the transfer of uridine 5-monophosphate (from uridine 5-triphosphate), a reaction catalyzed by the N-terminal domain.</text>
</comment>
<comment type="catalytic activity">
    <reaction evidence="1">
        <text>alpha-D-glucosamine 1-phosphate + acetyl-CoA = N-acetyl-alpha-D-glucosamine 1-phosphate + CoA + H(+)</text>
        <dbReference type="Rhea" id="RHEA:13725"/>
        <dbReference type="ChEBI" id="CHEBI:15378"/>
        <dbReference type="ChEBI" id="CHEBI:57287"/>
        <dbReference type="ChEBI" id="CHEBI:57288"/>
        <dbReference type="ChEBI" id="CHEBI:57776"/>
        <dbReference type="ChEBI" id="CHEBI:58516"/>
        <dbReference type="EC" id="2.3.1.157"/>
    </reaction>
</comment>
<comment type="catalytic activity">
    <reaction evidence="1">
        <text>N-acetyl-alpha-D-glucosamine 1-phosphate + UTP + H(+) = UDP-N-acetyl-alpha-D-glucosamine + diphosphate</text>
        <dbReference type="Rhea" id="RHEA:13509"/>
        <dbReference type="ChEBI" id="CHEBI:15378"/>
        <dbReference type="ChEBI" id="CHEBI:33019"/>
        <dbReference type="ChEBI" id="CHEBI:46398"/>
        <dbReference type="ChEBI" id="CHEBI:57705"/>
        <dbReference type="ChEBI" id="CHEBI:57776"/>
        <dbReference type="EC" id="2.7.7.23"/>
    </reaction>
</comment>
<comment type="cofactor">
    <cofactor evidence="1">
        <name>Mg(2+)</name>
        <dbReference type="ChEBI" id="CHEBI:18420"/>
    </cofactor>
    <text evidence="1">Binds 1 Mg(2+) ion per subunit.</text>
</comment>
<comment type="pathway">
    <text evidence="1">Nucleotide-sugar biosynthesis; UDP-N-acetyl-alpha-D-glucosamine biosynthesis; N-acetyl-alpha-D-glucosamine 1-phosphate from alpha-D-glucosamine 6-phosphate (route II): step 2/2.</text>
</comment>
<comment type="pathway">
    <text evidence="1">Nucleotide-sugar biosynthesis; UDP-N-acetyl-alpha-D-glucosamine biosynthesis; UDP-N-acetyl-alpha-D-glucosamine from N-acetyl-alpha-D-glucosamine 1-phosphate: step 1/1.</text>
</comment>
<comment type="pathway">
    <text evidence="1">Bacterial outer membrane biogenesis; LPS lipid A biosynthesis.</text>
</comment>
<comment type="subunit">
    <text evidence="1">Homotrimer.</text>
</comment>
<comment type="subcellular location">
    <subcellularLocation>
        <location evidence="1">Cytoplasm</location>
    </subcellularLocation>
</comment>
<comment type="similarity">
    <text evidence="1">In the N-terminal section; belongs to the N-acetylglucosamine-1-phosphate uridyltransferase family.</text>
</comment>
<comment type="similarity">
    <text evidence="1">In the C-terminal section; belongs to the transferase hexapeptide repeat family.</text>
</comment>
<sequence length="455" mass="49656">MGLSVVILAAGKGSRMNSNKPKVLQTLAAKTLIEHVVSSVEKLNPDNIVVVTGHLKEQVEDALQGRNITFVYQQQQLGTGHAVLQALPYLKEQKVLILYGDVPLISTEVLENLVDTTNDDDLGVLTAFVENPQGLGRIVRDKFGAVTEIVEEKDANDIQRQIKEINTGIYCVHKNLLQKWLPEIKANNVQKEYYLTDIITFAKADHVSINVTHPINEFEILGVNDRTQLASLERVWQRNVAEKIMAKGVSIADPNRFDVRGNLDVGKDCWIDINVIIKGNVKLGNNVVIGANCILKNCIIEDNVRIKSNSMVDGSIIREGAIVGPFARVRPECDVKEGAVIGNFVEAKKTILGKGSKASHLTYLGDSEIGANCNIGAGVITCNYDGVNKHKTVIGDYAFIGSDSQLIAPVNIGQGATVGAGSTIVKDVPADNLAISRARQRHIDTWQRSVKKTDK</sequence>
<organism>
    <name type="scientific">Francisella tularensis subsp. tularensis (strain WY96-3418)</name>
    <dbReference type="NCBI Taxonomy" id="418136"/>
    <lineage>
        <taxon>Bacteria</taxon>
        <taxon>Pseudomonadati</taxon>
        <taxon>Pseudomonadota</taxon>
        <taxon>Gammaproteobacteria</taxon>
        <taxon>Thiotrichales</taxon>
        <taxon>Francisellaceae</taxon>
        <taxon>Francisella</taxon>
    </lineage>
</organism>
<protein>
    <recommendedName>
        <fullName evidence="1">Bifunctional protein GlmU</fullName>
    </recommendedName>
    <domain>
        <recommendedName>
            <fullName evidence="1">UDP-N-acetylglucosamine pyrophosphorylase</fullName>
            <ecNumber evidence="1">2.7.7.23</ecNumber>
        </recommendedName>
        <alternativeName>
            <fullName evidence="1">N-acetylglucosamine-1-phosphate uridyltransferase</fullName>
        </alternativeName>
    </domain>
    <domain>
        <recommendedName>
            <fullName evidence="1">Glucosamine-1-phosphate N-acetyltransferase</fullName>
            <ecNumber evidence="1">2.3.1.157</ecNumber>
        </recommendedName>
    </domain>
</protein>
<feature type="chain" id="PRO_1000056158" description="Bifunctional protein GlmU">
    <location>
        <begin position="1"/>
        <end position="455"/>
    </location>
</feature>
<feature type="region of interest" description="Pyrophosphorylase" evidence="1">
    <location>
        <begin position="1"/>
        <end position="226"/>
    </location>
</feature>
<feature type="region of interest" description="Linker" evidence="1">
    <location>
        <begin position="227"/>
        <end position="247"/>
    </location>
</feature>
<feature type="region of interest" description="N-acetyltransferase" evidence="1">
    <location>
        <begin position="248"/>
        <end position="455"/>
    </location>
</feature>
<feature type="active site" description="Proton acceptor" evidence="1">
    <location>
        <position position="360"/>
    </location>
</feature>
<feature type="binding site" evidence="1">
    <location>
        <begin position="8"/>
        <end position="11"/>
    </location>
    <ligand>
        <name>UDP-N-acetyl-alpha-D-glucosamine</name>
        <dbReference type="ChEBI" id="CHEBI:57705"/>
    </ligand>
</feature>
<feature type="binding site" evidence="1">
    <location>
        <position position="22"/>
    </location>
    <ligand>
        <name>UDP-N-acetyl-alpha-D-glucosamine</name>
        <dbReference type="ChEBI" id="CHEBI:57705"/>
    </ligand>
</feature>
<feature type="binding site" evidence="1">
    <location>
        <position position="73"/>
    </location>
    <ligand>
        <name>UDP-N-acetyl-alpha-D-glucosamine</name>
        <dbReference type="ChEBI" id="CHEBI:57705"/>
    </ligand>
</feature>
<feature type="binding site" evidence="1">
    <location>
        <begin position="78"/>
        <end position="79"/>
    </location>
    <ligand>
        <name>UDP-N-acetyl-alpha-D-glucosamine</name>
        <dbReference type="ChEBI" id="CHEBI:57705"/>
    </ligand>
</feature>
<feature type="binding site" evidence="1">
    <location>
        <begin position="99"/>
        <end position="101"/>
    </location>
    <ligand>
        <name>UDP-N-acetyl-alpha-D-glucosamine</name>
        <dbReference type="ChEBI" id="CHEBI:57705"/>
    </ligand>
</feature>
<feature type="binding site" evidence="1">
    <location>
        <position position="101"/>
    </location>
    <ligand>
        <name>Mg(2+)</name>
        <dbReference type="ChEBI" id="CHEBI:18420"/>
    </ligand>
</feature>
<feature type="binding site" evidence="1">
    <location>
        <position position="136"/>
    </location>
    <ligand>
        <name>UDP-N-acetyl-alpha-D-glucosamine</name>
        <dbReference type="ChEBI" id="CHEBI:57705"/>
    </ligand>
</feature>
<feature type="binding site" evidence="1">
    <location>
        <position position="151"/>
    </location>
    <ligand>
        <name>UDP-N-acetyl-alpha-D-glucosamine</name>
        <dbReference type="ChEBI" id="CHEBI:57705"/>
    </ligand>
</feature>
<feature type="binding site" evidence="1">
    <location>
        <position position="166"/>
    </location>
    <ligand>
        <name>UDP-N-acetyl-alpha-D-glucosamine</name>
        <dbReference type="ChEBI" id="CHEBI:57705"/>
    </ligand>
</feature>
<feature type="binding site" evidence="1">
    <location>
        <position position="224"/>
    </location>
    <ligand>
        <name>Mg(2+)</name>
        <dbReference type="ChEBI" id="CHEBI:18420"/>
    </ligand>
</feature>
<feature type="binding site" evidence="1">
    <location>
        <position position="224"/>
    </location>
    <ligand>
        <name>UDP-N-acetyl-alpha-D-glucosamine</name>
        <dbReference type="ChEBI" id="CHEBI:57705"/>
    </ligand>
</feature>
<feature type="binding site" evidence="1">
    <location>
        <position position="330"/>
    </location>
    <ligand>
        <name>UDP-N-acetyl-alpha-D-glucosamine</name>
        <dbReference type="ChEBI" id="CHEBI:57705"/>
    </ligand>
</feature>
<feature type="binding site" evidence="1">
    <location>
        <position position="348"/>
    </location>
    <ligand>
        <name>UDP-N-acetyl-alpha-D-glucosamine</name>
        <dbReference type="ChEBI" id="CHEBI:57705"/>
    </ligand>
</feature>
<feature type="binding site" evidence="1">
    <location>
        <position position="363"/>
    </location>
    <ligand>
        <name>UDP-N-acetyl-alpha-D-glucosamine</name>
        <dbReference type="ChEBI" id="CHEBI:57705"/>
    </ligand>
</feature>
<feature type="binding site" evidence="1">
    <location>
        <position position="374"/>
    </location>
    <ligand>
        <name>UDP-N-acetyl-alpha-D-glucosamine</name>
        <dbReference type="ChEBI" id="CHEBI:57705"/>
    </ligand>
</feature>
<feature type="binding site" evidence="1">
    <location>
        <position position="377"/>
    </location>
    <ligand>
        <name>acetyl-CoA</name>
        <dbReference type="ChEBI" id="CHEBI:57288"/>
    </ligand>
</feature>
<feature type="binding site" evidence="1">
    <location>
        <begin position="383"/>
        <end position="384"/>
    </location>
    <ligand>
        <name>acetyl-CoA</name>
        <dbReference type="ChEBI" id="CHEBI:57288"/>
    </ligand>
</feature>
<feature type="binding site" evidence="1">
    <location>
        <position position="402"/>
    </location>
    <ligand>
        <name>acetyl-CoA</name>
        <dbReference type="ChEBI" id="CHEBI:57288"/>
    </ligand>
</feature>
<feature type="binding site" evidence="1">
    <location>
        <position position="420"/>
    </location>
    <ligand>
        <name>acetyl-CoA</name>
        <dbReference type="ChEBI" id="CHEBI:57288"/>
    </ligand>
</feature>
<feature type="binding site" evidence="1">
    <location>
        <position position="437"/>
    </location>
    <ligand>
        <name>acetyl-CoA</name>
        <dbReference type="ChEBI" id="CHEBI:57288"/>
    </ligand>
</feature>
<proteinExistence type="inferred from homology"/>
<dbReference type="EC" id="2.7.7.23" evidence="1"/>
<dbReference type="EC" id="2.3.1.157" evidence="1"/>
<dbReference type="EMBL" id="CP000608">
    <property type="protein sequence ID" value="ABO47377.1"/>
    <property type="molecule type" value="Genomic_DNA"/>
</dbReference>
<dbReference type="RefSeq" id="WP_003027098.1">
    <property type="nucleotide sequence ID" value="NC_009257.1"/>
</dbReference>
<dbReference type="SMR" id="A4IZM7"/>
<dbReference type="KEGG" id="ftw:FTW_1687"/>
<dbReference type="HOGENOM" id="CLU_029499_15_2_6"/>
<dbReference type="UniPathway" id="UPA00113">
    <property type="reaction ID" value="UER00532"/>
</dbReference>
<dbReference type="UniPathway" id="UPA00113">
    <property type="reaction ID" value="UER00533"/>
</dbReference>
<dbReference type="UniPathway" id="UPA00973"/>
<dbReference type="GO" id="GO:0005737">
    <property type="term" value="C:cytoplasm"/>
    <property type="evidence" value="ECO:0007669"/>
    <property type="project" value="UniProtKB-SubCell"/>
</dbReference>
<dbReference type="GO" id="GO:0016020">
    <property type="term" value="C:membrane"/>
    <property type="evidence" value="ECO:0007669"/>
    <property type="project" value="GOC"/>
</dbReference>
<dbReference type="GO" id="GO:0019134">
    <property type="term" value="F:glucosamine-1-phosphate N-acetyltransferase activity"/>
    <property type="evidence" value="ECO:0007669"/>
    <property type="project" value="UniProtKB-UniRule"/>
</dbReference>
<dbReference type="GO" id="GO:0000287">
    <property type="term" value="F:magnesium ion binding"/>
    <property type="evidence" value="ECO:0007669"/>
    <property type="project" value="UniProtKB-UniRule"/>
</dbReference>
<dbReference type="GO" id="GO:0003977">
    <property type="term" value="F:UDP-N-acetylglucosamine diphosphorylase activity"/>
    <property type="evidence" value="ECO:0007669"/>
    <property type="project" value="UniProtKB-UniRule"/>
</dbReference>
<dbReference type="GO" id="GO:0000902">
    <property type="term" value="P:cell morphogenesis"/>
    <property type="evidence" value="ECO:0007669"/>
    <property type="project" value="UniProtKB-UniRule"/>
</dbReference>
<dbReference type="GO" id="GO:0071555">
    <property type="term" value="P:cell wall organization"/>
    <property type="evidence" value="ECO:0007669"/>
    <property type="project" value="UniProtKB-KW"/>
</dbReference>
<dbReference type="GO" id="GO:0009245">
    <property type="term" value="P:lipid A biosynthetic process"/>
    <property type="evidence" value="ECO:0007669"/>
    <property type="project" value="UniProtKB-UniRule"/>
</dbReference>
<dbReference type="GO" id="GO:0009252">
    <property type="term" value="P:peptidoglycan biosynthetic process"/>
    <property type="evidence" value="ECO:0007669"/>
    <property type="project" value="UniProtKB-UniRule"/>
</dbReference>
<dbReference type="GO" id="GO:0008360">
    <property type="term" value="P:regulation of cell shape"/>
    <property type="evidence" value="ECO:0007669"/>
    <property type="project" value="UniProtKB-KW"/>
</dbReference>
<dbReference type="GO" id="GO:0006048">
    <property type="term" value="P:UDP-N-acetylglucosamine biosynthetic process"/>
    <property type="evidence" value="ECO:0007669"/>
    <property type="project" value="UniProtKB-UniPathway"/>
</dbReference>
<dbReference type="CDD" id="cd02540">
    <property type="entry name" value="GT2_GlmU_N_bac"/>
    <property type="match status" value="1"/>
</dbReference>
<dbReference type="CDD" id="cd03353">
    <property type="entry name" value="LbH_GlmU_C"/>
    <property type="match status" value="1"/>
</dbReference>
<dbReference type="Gene3D" id="2.160.10.10">
    <property type="entry name" value="Hexapeptide repeat proteins"/>
    <property type="match status" value="1"/>
</dbReference>
<dbReference type="Gene3D" id="3.90.550.10">
    <property type="entry name" value="Spore Coat Polysaccharide Biosynthesis Protein SpsA, Chain A"/>
    <property type="match status" value="1"/>
</dbReference>
<dbReference type="HAMAP" id="MF_01631">
    <property type="entry name" value="GlmU"/>
    <property type="match status" value="1"/>
</dbReference>
<dbReference type="InterPro" id="IPR005882">
    <property type="entry name" value="Bifunctional_GlmU"/>
</dbReference>
<dbReference type="InterPro" id="IPR050065">
    <property type="entry name" value="GlmU-like"/>
</dbReference>
<dbReference type="InterPro" id="IPR038009">
    <property type="entry name" value="GlmU_C_LbH"/>
</dbReference>
<dbReference type="InterPro" id="IPR001451">
    <property type="entry name" value="Hexapep"/>
</dbReference>
<dbReference type="InterPro" id="IPR018357">
    <property type="entry name" value="Hexapep_transf_CS"/>
</dbReference>
<dbReference type="InterPro" id="IPR025877">
    <property type="entry name" value="MobA-like_NTP_Trfase"/>
</dbReference>
<dbReference type="InterPro" id="IPR029044">
    <property type="entry name" value="Nucleotide-diphossugar_trans"/>
</dbReference>
<dbReference type="InterPro" id="IPR011004">
    <property type="entry name" value="Trimer_LpxA-like_sf"/>
</dbReference>
<dbReference type="NCBIfam" id="TIGR01173">
    <property type="entry name" value="glmU"/>
    <property type="match status" value="1"/>
</dbReference>
<dbReference type="PANTHER" id="PTHR43584:SF3">
    <property type="entry name" value="BIFUNCTIONAL PROTEIN GLMU"/>
    <property type="match status" value="1"/>
</dbReference>
<dbReference type="PANTHER" id="PTHR43584">
    <property type="entry name" value="NUCLEOTIDYL TRANSFERASE"/>
    <property type="match status" value="1"/>
</dbReference>
<dbReference type="Pfam" id="PF00132">
    <property type="entry name" value="Hexapep"/>
    <property type="match status" value="2"/>
</dbReference>
<dbReference type="Pfam" id="PF12804">
    <property type="entry name" value="NTP_transf_3"/>
    <property type="match status" value="1"/>
</dbReference>
<dbReference type="SUPFAM" id="SSF53448">
    <property type="entry name" value="Nucleotide-diphospho-sugar transferases"/>
    <property type="match status" value="1"/>
</dbReference>
<dbReference type="SUPFAM" id="SSF51161">
    <property type="entry name" value="Trimeric LpxA-like enzymes"/>
    <property type="match status" value="1"/>
</dbReference>
<dbReference type="PROSITE" id="PS00101">
    <property type="entry name" value="HEXAPEP_TRANSFERASES"/>
    <property type="match status" value="1"/>
</dbReference>
<name>GLMU_FRATW</name>
<accession>A4IZM7</accession>
<keyword id="KW-0012">Acyltransferase</keyword>
<keyword id="KW-0133">Cell shape</keyword>
<keyword id="KW-0961">Cell wall biogenesis/degradation</keyword>
<keyword id="KW-0963">Cytoplasm</keyword>
<keyword id="KW-0460">Magnesium</keyword>
<keyword id="KW-0479">Metal-binding</keyword>
<keyword id="KW-0511">Multifunctional enzyme</keyword>
<keyword id="KW-0548">Nucleotidyltransferase</keyword>
<keyword id="KW-0573">Peptidoglycan synthesis</keyword>
<keyword id="KW-0677">Repeat</keyword>
<keyword id="KW-0808">Transferase</keyword>
<evidence type="ECO:0000255" key="1">
    <source>
        <dbReference type="HAMAP-Rule" id="MF_01631"/>
    </source>
</evidence>
<gene>
    <name evidence="1" type="primary">glmU</name>
    <name type="ordered locus">FTW_1687</name>
</gene>